<comment type="function">
    <text evidence="1">Catalyzes the attachment of threonine to tRNA(Thr) in a two-step reaction: L-threonine is first activated by ATP to form Thr-AMP and then transferred to the acceptor end of tRNA(Thr). Also edits incorrectly charged L-seryl-tRNA(Thr).</text>
</comment>
<comment type="catalytic activity">
    <reaction evidence="1">
        <text>tRNA(Thr) + L-threonine + ATP = L-threonyl-tRNA(Thr) + AMP + diphosphate + H(+)</text>
        <dbReference type="Rhea" id="RHEA:24624"/>
        <dbReference type="Rhea" id="RHEA-COMP:9670"/>
        <dbReference type="Rhea" id="RHEA-COMP:9704"/>
        <dbReference type="ChEBI" id="CHEBI:15378"/>
        <dbReference type="ChEBI" id="CHEBI:30616"/>
        <dbReference type="ChEBI" id="CHEBI:33019"/>
        <dbReference type="ChEBI" id="CHEBI:57926"/>
        <dbReference type="ChEBI" id="CHEBI:78442"/>
        <dbReference type="ChEBI" id="CHEBI:78534"/>
        <dbReference type="ChEBI" id="CHEBI:456215"/>
        <dbReference type="EC" id="6.1.1.3"/>
    </reaction>
</comment>
<comment type="cofactor">
    <cofactor evidence="1">
        <name>Zn(2+)</name>
        <dbReference type="ChEBI" id="CHEBI:29105"/>
    </cofactor>
    <text evidence="1">Binds 1 zinc ion per subunit.</text>
</comment>
<comment type="subunit">
    <text evidence="1">Homodimer.</text>
</comment>
<comment type="subcellular location">
    <subcellularLocation>
        <location evidence="1">Cytoplasm</location>
    </subcellularLocation>
</comment>
<comment type="similarity">
    <text evidence="1">Belongs to the class-II aminoacyl-tRNA synthetase family.</text>
</comment>
<protein>
    <recommendedName>
        <fullName evidence="1">Threonine--tRNA ligase</fullName>
        <ecNumber evidence="1">6.1.1.3</ecNumber>
    </recommendedName>
    <alternativeName>
        <fullName evidence="1">Threonyl-tRNA synthetase</fullName>
        <shortName evidence="1">ThrRS</shortName>
    </alternativeName>
</protein>
<name>SYT_BART1</name>
<feature type="chain" id="PRO_1000077347" description="Threonine--tRNA ligase">
    <location>
        <begin position="1"/>
        <end position="658"/>
    </location>
</feature>
<feature type="domain" description="TGS" evidence="2">
    <location>
        <begin position="1"/>
        <end position="64"/>
    </location>
</feature>
<feature type="region of interest" description="Catalytic" evidence="1">
    <location>
        <begin position="246"/>
        <end position="549"/>
    </location>
</feature>
<feature type="binding site" evidence="1">
    <location>
        <position position="343"/>
    </location>
    <ligand>
        <name>Zn(2+)</name>
        <dbReference type="ChEBI" id="CHEBI:29105"/>
    </ligand>
</feature>
<feature type="binding site" evidence="1">
    <location>
        <position position="394"/>
    </location>
    <ligand>
        <name>Zn(2+)</name>
        <dbReference type="ChEBI" id="CHEBI:29105"/>
    </ligand>
</feature>
<feature type="binding site" evidence="1">
    <location>
        <position position="526"/>
    </location>
    <ligand>
        <name>Zn(2+)</name>
        <dbReference type="ChEBI" id="CHEBI:29105"/>
    </ligand>
</feature>
<proteinExistence type="inferred from homology"/>
<gene>
    <name evidence="1" type="primary">thrS</name>
    <name type="ordered locus">BT_1306</name>
</gene>
<keyword id="KW-0030">Aminoacyl-tRNA synthetase</keyword>
<keyword id="KW-0067">ATP-binding</keyword>
<keyword id="KW-0963">Cytoplasm</keyword>
<keyword id="KW-0436">Ligase</keyword>
<keyword id="KW-0479">Metal-binding</keyword>
<keyword id="KW-0547">Nucleotide-binding</keyword>
<keyword id="KW-0648">Protein biosynthesis</keyword>
<keyword id="KW-0694">RNA-binding</keyword>
<keyword id="KW-0820">tRNA-binding</keyword>
<keyword id="KW-0862">Zinc</keyword>
<sequence>MSCSISLSFPDGSKRNYPAEMTGLELAESISKSLAKKAVAYSLDGITRDLSDSLGQSGQVEIITREDSRALELIRHDCAHVLAEAVQELFPETQVTIGPVIENGFYYDFARQQPFTLDDLTIIEKKMREIIQRNKPFRKEIWSREKARRVFSEKKEFYKVELINSIPDNQDLKIYYQGEWFDLCRGPHMQSTGQIGNAFKLMKVAGAYWRGDANNPMLTRIYGTAFANENDLKAYLHMLEEAEKRDHRRLGREMDLFHFQEEGPGMIFWHQKGWKMFQNLINYMRRRLDDHQYAEVNAPQVLDRSLWEISGHWGWYKENMFKAIPAAEDLDHEHIYALKPMNCPGHVQIFKHGLKSYRDLPIRLAEFGLVHRYEPSGSLHGLMRVRSFTQDDAHIFCTDEQLAAECLSINDLILSTYADFGFKEISLKLSTRPEKRVGSDALWDHAESIMESVLKTIETKFAGQIKTSILPGEGAFYGPKFEYTLKDAIGREWQCGTTQLDFNLPERFGAFYIDKDSEKRQPVMIHRAIFGSMERFLGILIENFAGHMPLWLAPEQIVVATITSEANEYAQKITARLKAVGLSATTDLRNEKINYKIREHSLQKVPVILVCGKREAETNSVNMRRLGSPNQTLLSVEDAIKQLSNESTPPDLQRVINA</sequence>
<dbReference type="EC" id="6.1.1.3" evidence="1"/>
<dbReference type="EMBL" id="AM260525">
    <property type="protein sequence ID" value="CAK01670.1"/>
    <property type="molecule type" value="Genomic_DNA"/>
</dbReference>
<dbReference type="RefSeq" id="WP_012231852.1">
    <property type="nucleotide sequence ID" value="NC_010161.1"/>
</dbReference>
<dbReference type="SMR" id="A9IVB0"/>
<dbReference type="KEGG" id="btr:BT_1306"/>
<dbReference type="eggNOG" id="COG0441">
    <property type="taxonomic scope" value="Bacteria"/>
</dbReference>
<dbReference type="HOGENOM" id="CLU_008554_0_1_5"/>
<dbReference type="Proteomes" id="UP000001592">
    <property type="component" value="Chromosome"/>
</dbReference>
<dbReference type="GO" id="GO:0005829">
    <property type="term" value="C:cytosol"/>
    <property type="evidence" value="ECO:0007669"/>
    <property type="project" value="TreeGrafter"/>
</dbReference>
<dbReference type="GO" id="GO:0005524">
    <property type="term" value="F:ATP binding"/>
    <property type="evidence" value="ECO:0007669"/>
    <property type="project" value="UniProtKB-UniRule"/>
</dbReference>
<dbReference type="GO" id="GO:0046872">
    <property type="term" value="F:metal ion binding"/>
    <property type="evidence" value="ECO:0007669"/>
    <property type="project" value="UniProtKB-KW"/>
</dbReference>
<dbReference type="GO" id="GO:0004829">
    <property type="term" value="F:threonine-tRNA ligase activity"/>
    <property type="evidence" value="ECO:0007669"/>
    <property type="project" value="UniProtKB-UniRule"/>
</dbReference>
<dbReference type="GO" id="GO:0000049">
    <property type="term" value="F:tRNA binding"/>
    <property type="evidence" value="ECO:0007669"/>
    <property type="project" value="UniProtKB-KW"/>
</dbReference>
<dbReference type="GO" id="GO:0006435">
    <property type="term" value="P:threonyl-tRNA aminoacylation"/>
    <property type="evidence" value="ECO:0007669"/>
    <property type="project" value="UniProtKB-UniRule"/>
</dbReference>
<dbReference type="CDD" id="cd01667">
    <property type="entry name" value="TGS_ThrRS"/>
    <property type="match status" value="1"/>
</dbReference>
<dbReference type="CDD" id="cd00860">
    <property type="entry name" value="ThrRS_anticodon"/>
    <property type="match status" value="1"/>
</dbReference>
<dbReference type="CDD" id="cd00771">
    <property type="entry name" value="ThrRS_core"/>
    <property type="match status" value="1"/>
</dbReference>
<dbReference type="FunFam" id="3.30.54.20:FF:000002">
    <property type="entry name" value="Threonine--tRNA ligase"/>
    <property type="match status" value="1"/>
</dbReference>
<dbReference type="FunFam" id="3.30.930.10:FF:000002">
    <property type="entry name" value="Threonine--tRNA ligase"/>
    <property type="match status" value="1"/>
</dbReference>
<dbReference type="FunFam" id="3.40.50.800:FF:000001">
    <property type="entry name" value="Threonine--tRNA ligase"/>
    <property type="match status" value="1"/>
</dbReference>
<dbReference type="FunFam" id="3.30.980.10:FF:000005">
    <property type="entry name" value="Threonyl-tRNA synthetase, mitochondrial"/>
    <property type="match status" value="1"/>
</dbReference>
<dbReference type="Gene3D" id="3.10.20.30">
    <property type="match status" value="1"/>
</dbReference>
<dbReference type="Gene3D" id="3.30.54.20">
    <property type="match status" value="1"/>
</dbReference>
<dbReference type="Gene3D" id="3.40.50.800">
    <property type="entry name" value="Anticodon-binding domain"/>
    <property type="match status" value="1"/>
</dbReference>
<dbReference type="Gene3D" id="3.30.930.10">
    <property type="entry name" value="Bira Bifunctional Protein, Domain 2"/>
    <property type="match status" value="1"/>
</dbReference>
<dbReference type="Gene3D" id="3.30.980.10">
    <property type="entry name" value="Threonyl-trna Synthetase, Chain A, domain 2"/>
    <property type="match status" value="1"/>
</dbReference>
<dbReference type="HAMAP" id="MF_00184">
    <property type="entry name" value="Thr_tRNA_synth"/>
    <property type="match status" value="1"/>
</dbReference>
<dbReference type="InterPro" id="IPR002314">
    <property type="entry name" value="aa-tRNA-synt_IIb"/>
</dbReference>
<dbReference type="InterPro" id="IPR006195">
    <property type="entry name" value="aa-tRNA-synth_II"/>
</dbReference>
<dbReference type="InterPro" id="IPR045864">
    <property type="entry name" value="aa-tRNA-synth_II/BPL/LPL"/>
</dbReference>
<dbReference type="InterPro" id="IPR004154">
    <property type="entry name" value="Anticodon-bd"/>
</dbReference>
<dbReference type="InterPro" id="IPR036621">
    <property type="entry name" value="Anticodon-bd_dom_sf"/>
</dbReference>
<dbReference type="InterPro" id="IPR012675">
    <property type="entry name" value="Beta-grasp_dom_sf"/>
</dbReference>
<dbReference type="InterPro" id="IPR004095">
    <property type="entry name" value="TGS"/>
</dbReference>
<dbReference type="InterPro" id="IPR012676">
    <property type="entry name" value="TGS-like"/>
</dbReference>
<dbReference type="InterPro" id="IPR002320">
    <property type="entry name" value="Thr-tRNA-ligase_IIa"/>
</dbReference>
<dbReference type="InterPro" id="IPR018163">
    <property type="entry name" value="Thr/Ala-tRNA-synth_IIc_edit"/>
</dbReference>
<dbReference type="InterPro" id="IPR047246">
    <property type="entry name" value="ThrRS_anticodon"/>
</dbReference>
<dbReference type="InterPro" id="IPR033728">
    <property type="entry name" value="ThrRS_core"/>
</dbReference>
<dbReference type="InterPro" id="IPR012947">
    <property type="entry name" value="tRNA_SAD"/>
</dbReference>
<dbReference type="NCBIfam" id="TIGR00418">
    <property type="entry name" value="thrS"/>
    <property type="match status" value="1"/>
</dbReference>
<dbReference type="PANTHER" id="PTHR11451:SF44">
    <property type="entry name" value="THREONINE--TRNA LIGASE, CHLOROPLASTIC_MITOCHONDRIAL 2"/>
    <property type="match status" value="1"/>
</dbReference>
<dbReference type="PANTHER" id="PTHR11451">
    <property type="entry name" value="THREONINE-TRNA LIGASE"/>
    <property type="match status" value="1"/>
</dbReference>
<dbReference type="Pfam" id="PF03129">
    <property type="entry name" value="HGTP_anticodon"/>
    <property type="match status" value="1"/>
</dbReference>
<dbReference type="Pfam" id="PF00587">
    <property type="entry name" value="tRNA-synt_2b"/>
    <property type="match status" value="1"/>
</dbReference>
<dbReference type="Pfam" id="PF07973">
    <property type="entry name" value="tRNA_SAD"/>
    <property type="match status" value="1"/>
</dbReference>
<dbReference type="PRINTS" id="PR01047">
    <property type="entry name" value="TRNASYNTHTHR"/>
</dbReference>
<dbReference type="SMART" id="SM00863">
    <property type="entry name" value="tRNA_SAD"/>
    <property type="match status" value="1"/>
</dbReference>
<dbReference type="SUPFAM" id="SSF52954">
    <property type="entry name" value="Class II aaRS ABD-related"/>
    <property type="match status" value="1"/>
</dbReference>
<dbReference type="SUPFAM" id="SSF55681">
    <property type="entry name" value="Class II aaRS and biotin synthetases"/>
    <property type="match status" value="1"/>
</dbReference>
<dbReference type="SUPFAM" id="SSF81271">
    <property type="entry name" value="TGS-like"/>
    <property type="match status" value="1"/>
</dbReference>
<dbReference type="SUPFAM" id="SSF55186">
    <property type="entry name" value="ThrRS/AlaRS common domain"/>
    <property type="match status" value="1"/>
</dbReference>
<dbReference type="PROSITE" id="PS50862">
    <property type="entry name" value="AA_TRNA_LIGASE_II"/>
    <property type="match status" value="1"/>
</dbReference>
<dbReference type="PROSITE" id="PS51880">
    <property type="entry name" value="TGS"/>
    <property type="match status" value="1"/>
</dbReference>
<accession>A9IVB0</accession>
<reference key="1">
    <citation type="journal article" date="2007" name="Nat. Genet.">
        <title>Genomic analysis of Bartonella identifies type IV secretion systems as host adaptability factors.</title>
        <authorList>
            <person name="Saenz H.L."/>
            <person name="Engel P."/>
            <person name="Stoeckli M.C."/>
            <person name="Lanz C."/>
            <person name="Raddatz G."/>
            <person name="Vayssier-Taussat M."/>
            <person name="Birtles R."/>
            <person name="Schuster S.C."/>
            <person name="Dehio C."/>
        </authorList>
    </citation>
    <scope>NUCLEOTIDE SEQUENCE [LARGE SCALE GENOMIC DNA]</scope>
    <source>
        <strain>CIP 105476 / IBS 506</strain>
    </source>
</reference>
<evidence type="ECO:0000255" key="1">
    <source>
        <dbReference type="HAMAP-Rule" id="MF_00184"/>
    </source>
</evidence>
<evidence type="ECO:0000255" key="2">
    <source>
        <dbReference type="PROSITE-ProRule" id="PRU01228"/>
    </source>
</evidence>
<organism>
    <name type="scientific">Bartonella tribocorum (strain CIP 105476 / IBS 506)</name>
    <dbReference type="NCBI Taxonomy" id="382640"/>
    <lineage>
        <taxon>Bacteria</taxon>
        <taxon>Pseudomonadati</taxon>
        <taxon>Pseudomonadota</taxon>
        <taxon>Alphaproteobacteria</taxon>
        <taxon>Hyphomicrobiales</taxon>
        <taxon>Bartonellaceae</taxon>
        <taxon>Bartonella</taxon>
    </lineage>
</organism>